<protein>
    <recommendedName>
        <fullName evidence="1">Eukaryotic translation initiation factor 3 subunit A</fullName>
        <shortName evidence="1">eIF3a</shortName>
    </recommendedName>
    <alternativeName>
        <fullName evidence="1">Eukaryotic translation initiation factor 3 110 kDa subunit homolog</fullName>
        <shortName evidence="1">eIF3 p110</shortName>
    </alternativeName>
    <alternativeName>
        <fullName evidence="1">Translation initiation factor eIF3, p110 subunit homolog</fullName>
    </alternativeName>
</protein>
<dbReference type="EMBL" id="GG704914">
    <property type="protein sequence ID" value="KJF61057.1"/>
    <property type="molecule type" value="Genomic_DNA"/>
</dbReference>
<dbReference type="RefSeq" id="XP_004446109.1">
    <property type="nucleotide sequence ID" value="XM_004446052.1"/>
</dbReference>
<dbReference type="SMR" id="Q1DXU0"/>
<dbReference type="FunCoup" id="Q1DXU0">
    <property type="interactions" value="1242"/>
</dbReference>
<dbReference type="STRING" id="246410.Q1DXU0"/>
<dbReference type="GeneID" id="4563021"/>
<dbReference type="KEGG" id="cim:CIMG_04873"/>
<dbReference type="VEuPathDB" id="FungiDB:CIMG_04873"/>
<dbReference type="InParanoid" id="Q1DXU0"/>
<dbReference type="OMA" id="EHITNKR"/>
<dbReference type="OrthoDB" id="18884at2759"/>
<dbReference type="Proteomes" id="UP000001261">
    <property type="component" value="Unassembled WGS sequence"/>
</dbReference>
<dbReference type="GO" id="GO:0016282">
    <property type="term" value="C:eukaryotic 43S preinitiation complex"/>
    <property type="evidence" value="ECO:0007669"/>
    <property type="project" value="UniProtKB-UniRule"/>
</dbReference>
<dbReference type="GO" id="GO:0033290">
    <property type="term" value="C:eukaryotic 48S preinitiation complex"/>
    <property type="evidence" value="ECO:0007669"/>
    <property type="project" value="UniProtKB-UniRule"/>
</dbReference>
<dbReference type="GO" id="GO:0071540">
    <property type="term" value="C:eukaryotic translation initiation factor 3 complex, eIF3e"/>
    <property type="evidence" value="ECO:0007669"/>
    <property type="project" value="TreeGrafter"/>
</dbReference>
<dbReference type="GO" id="GO:0071541">
    <property type="term" value="C:eukaryotic translation initiation factor 3 complex, eIF3m"/>
    <property type="evidence" value="ECO:0007669"/>
    <property type="project" value="TreeGrafter"/>
</dbReference>
<dbReference type="GO" id="GO:0043614">
    <property type="term" value="C:multi-eIF complex"/>
    <property type="evidence" value="ECO:0007669"/>
    <property type="project" value="TreeGrafter"/>
</dbReference>
<dbReference type="GO" id="GO:0003729">
    <property type="term" value="F:mRNA binding"/>
    <property type="evidence" value="ECO:0007669"/>
    <property type="project" value="TreeGrafter"/>
</dbReference>
<dbReference type="GO" id="GO:0003743">
    <property type="term" value="F:translation initiation factor activity"/>
    <property type="evidence" value="ECO:0007669"/>
    <property type="project" value="UniProtKB-UniRule"/>
</dbReference>
<dbReference type="GO" id="GO:0001732">
    <property type="term" value="P:formation of cytoplasmic translation initiation complex"/>
    <property type="evidence" value="ECO:0007669"/>
    <property type="project" value="UniProtKB-UniRule"/>
</dbReference>
<dbReference type="GO" id="GO:0002188">
    <property type="term" value="P:translation reinitiation"/>
    <property type="evidence" value="ECO:0007669"/>
    <property type="project" value="TreeGrafter"/>
</dbReference>
<dbReference type="FunFam" id="1.25.40.860:FF:000003">
    <property type="entry name" value="Eukaryotic translation initiation factor 3 subunit A"/>
    <property type="match status" value="1"/>
</dbReference>
<dbReference type="FunFam" id="4.10.860.10:FF:000001">
    <property type="entry name" value="Eukaryotic translation initiation factor 3 subunit A"/>
    <property type="match status" value="1"/>
</dbReference>
<dbReference type="Gene3D" id="1.25.40.860">
    <property type="match status" value="2"/>
</dbReference>
<dbReference type="Gene3D" id="4.10.860.10">
    <property type="entry name" value="UVR domain"/>
    <property type="match status" value="1"/>
</dbReference>
<dbReference type="HAMAP" id="MF_03000">
    <property type="entry name" value="eIF3a"/>
    <property type="match status" value="1"/>
</dbReference>
<dbReference type="InterPro" id="IPR027512">
    <property type="entry name" value="EIF3A"/>
</dbReference>
<dbReference type="InterPro" id="IPR054711">
    <property type="entry name" value="eIF3a_PCI_TPR-like"/>
</dbReference>
<dbReference type="InterPro" id="IPR000717">
    <property type="entry name" value="PCI_dom"/>
</dbReference>
<dbReference type="PANTHER" id="PTHR14005:SF0">
    <property type="entry name" value="EUKARYOTIC TRANSLATION INITIATION FACTOR 3 SUBUNIT A"/>
    <property type="match status" value="1"/>
</dbReference>
<dbReference type="PANTHER" id="PTHR14005">
    <property type="entry name" value="EUKARYOTIC TRANSLATION INITIATION FACTOR 3, THETA SUBUNIT"/>
    <property type="match status" value="1"/>
</dbReference>
<dbReference type="Pfam" id="PF22591">
    <property type="entry name" value="eIF3a_PCI_TPR-like"/>
    <property type="match status" value="1"/>
</dbReference>
<dbReference type="Pfam" id="PF01399">
    <property type="entry name" value="PCI"/>
    <property type="match status" value="1"/>
</dbReference>
<dbReference type="SMART" id="SM00088">
    <property type="entry name" value="PINT"/>
    <property type="match status" value="1"/>
</dbReference>
<dbReference type="PROSITE" id="PS50250">
    <property type="entry name" value="PCI"/>
    <property type="match status" value="1"/>
</dbReference>
<keyword id="KW-0175">Coiled coil</keyword>
<keyword id="KW-0963">Cytoplasm</keyword>
<keyword id="KW-0396">Initiation factor</keyword>
<keyword id="KW-0648">Protein biosynthesis</keyword>
<keyword id="KW-1185">Reference proteome</keyword>
<keyword id="KW-0694">RNA-binding</keyword>
<accession>Q1DXU0</accession>
<accession>A0A0D8JUS6</accession>
<accession>I9NNH6</accession>
<name>EIF3A_COCIM</name>
<gene>
    <name evidence="1" type="primary">TIF32</name>
    <name type="ORF">CIMG_04873</name>
</gene>
<organism>
    <name type="scientific">Coccidioides immitis (strain RS)</name>
    <name type="common">Valley fever fungus</name>
    <dbReference type="NCBI Taxonomy" id="246410"/>
    <lineage>
        <taxon>Eukaryota</taxon>
        <taxon>Fungi</taxon>
        <taxon>Dikarya</taxon>
        <taxon>Ascomycota</taxon>
        <taxon>Pezizomycotina</taxon>
        <taxon>Eurotiomycetes</taxon>
        <taxon>Eurotiomycetidae</taxon>
        <taxon>Onygenales</taxon>
        <taxon>Onygenaceae</taxon>
        <taxon>Coccidioides</taxon>
    </lineage>
</organism>
<comment type="function">
    <text evidence="1">RNA-binding component of the eukaryotic translation initiation factor 3 (eIF-3) complex, which is involved in protein synthesis of a specialized repertoire of mRNAs and, together with other initiation factors, stimulates binding of mRNA and methionyl-tRNAi to the 40S ribosome. The eIF-3 complex specifically targets and initiates translation of a subset of mRNAs involved in cell proliferation.</text>
</comment>
<comment type="subunit">
    <text evidence="1">Component of the eukaryotic translation initiation factor 3 (eIF-3) complex.</text>
</comment>
<comment type="subcellular location">
    <subcellularLocation>
        <location evidence="1">Cytoplasm</location>
    </subcellularLocation>
</comment>
<comment type="similarity">
    <text evidence="1">Belongs to the eIF-3 subunit A family.</text>
</comment>
<reference key="1">
    <citation type="journal article" date="2009" name="Genome Res.">
        <title>Comparative genomic analyses of the human fungal pathogens Coccidioides and their relatives.</title>
        <authorList>
            <person name="Sharpton T.J."/>
            <person name="Stajich J.E."/>
            <person name="Rounsley S.D."/>
            <person name="Gardner M.J."/>
            <person name="Wortman J.R."/>
            <person name="Jordar V.S."/>
            <person name="Maiti R."/>
            <person name="Kodira C.D."/>
            <person name="Neafsey D.E."/>
            <person name="Zeng Q."/>
            <person name="Hung C.-Y."/>
            <person name="McMahan C."/>
            <person name="Muszewska A."/>
            <person name="Grynberg M."/>
            <person name="Mandel M.A."/>
            <person name="Kellner E.M."/>
            <person name="Barker B.M."/>
            <person name="Galgiani J.N."/>
            <person name="Orbach M.J."/>
            <person name="Kirkland T.N."/>
            <person name="Cole G.T."/>
            <person name="Henn M.R."/>
            <person name="Birren B.W."/>
            <person name="Taylor J.W."/>
        </authorList>
    </citation>
    <scope>NUCLEOTIDE SEQUENCE [LARGE SCALE GENOMIC DNA]</scope>
    <source>
        <strain>RS</strain>
    </source>
</reference>
<reference key="2">
    <citation type="journal article" date="2010" name="Genome Res.">
        <title>Population genomic sequencing of Coccidioides fungi reveals recent hybridization and transposon control.</title>
        <authorList>
            <person name="Neafsey D.E."/>
            <person name="Barker B.M."/>
            <person name="Sharpton T.J."/>
            <person name="Stajich J.E."/>
            <person name="Park D.J."/>
            <person name="Whiston E."/>
            <person name="Hung C.-Y."/>
            <person name="McMahan C."/>
            <person name="White J."/>
            <person name="Sykes S."/>
            <person name="Heiman D."/>
            <person name="Young S."/>
            <person name="Zeng Q."/>
            <person name="Abouelleil A."/>
            <person name="Aftuck L."/>
            <person name="Bessette D."/>
            <person name="Brown A."/>
            <person name="FitzGerald M."/>
            <person name="Lui A."/>
            <person name="Macdonald J.P."/>
            <person name="Priest M."/>
            <person name="Orbach M.J."/>
            <person name="Galgiani J.N."/>
            <person name="Kirkland T.N."/>
            <person name="Cole G.T."/>
            <person name="Birren B.W."/>
            <person name="Henn M.R."/>
            <person name="Taylor J.W."/>
            <person name="Rounsley S.D."/>
        </authorList>
    </citation>
    <scope>GENOME REANNOTATION</scope>
    <source>
        <strain>RS</strain>
    </source>
</reference>
<sequence>MPPIPHVRPENVLRRAEELIAVGQPAAALSVLHEHVTSKRSRSSPIASLEPVMLLFVELCVDLRKGKSAKDGLYQYKNIAQNTNVGTIEMVLKKFIELAEQKVTEAQAKADEIQSSLESAAPTSNVEDLDAIETPETILLATVSGEQSRDRTDRAVVTPWLKFLWETYRTVLEILKNNARLEVMYQATALQAFQFCLKYTRKTEFRRLCELLRNHVQNAAKYSAQMHAINLSDPDTLQRHLDTRFQQLNVAVELELWQEGFRSVEDIHTLLNLSKRQPKNIMMANYYEKLTKIFMVSDNYLFHAAAWNRYYNLLRQSAIALAAGQGSKKDSPSVTEADMTKAASFVLLSALSIPVISTSRSRGALVDVDEVRKNKNTRLTNLLGMPQPPTRASLFKDALNKGLLSRCRPEIRDLYNILEVDFHPLSICKKISPILKEIGADPEMEKYVLPLQQVILTRLFQQLSQVYESVELKFVHELAHFPEPFQVTSSMIEKFIMNGCKKGDLAIRVDHVSGVLTFESDIFSSAKALHPGSAAGSAESEVGSVQRLQSTPAEIARSQLARLAKTLHVTCMYVDPSYNQARIKAKEAAHARARAGAAKEHEETLTRRAIIEKRKEALSDALQKKQREEENRKRARNQQLQEAEQQRLLDEHRERERKRMKDEQDRIRQQELKKQLEELKTGVKGIDVNQIDLEELDSNRLRAIKLAQLEKEKNDLNEKIRITSKRIDHLERAFRREELKHLPEDYETQKKQDLETYEQTKEETLKAARQKHKEDVALKHRLSRLVPYFNDFKKSVTEKRHEEFERRRKAADREFEQKKKQRIKEVHERIRRERAEREAEEQRRREEEERIAREEQERIAKEEERRRALAEEKAAREEQRRKLDEQAIRQRQREEEAEQRRAARKAGLAEPRGPAREASPERTAPRLNLAGRTGTSWRDRQAAKAAASAGEQPAAAQEATPAPPAKAGSYLPPHLRATRDGPSDSRDLSHARESAAPPRQFSRSPVPPSGAPSSQEKPGPWRPRFKQQQ</sequence>
<proteinExistence type="inferred from homology"/>
<feature type="chain" id="PRO_0000366359" description="Eukaryotic translation initiation factor 3 subunit A">
    <location>
        <begin position="1"/>
        <end position="1029"/>
    </location>
</feature>
<feature type="domain" description="PCI" evidence="2">
    <location>
        <begin position="339"/>
        <end position="523"/>
    </location>
</feature>
<feature type="region of interest" description="Disordered" evidence="3">
    <location>
        <begin position="621"/>
        <end position="666"/>
    </location>
</feature>
<feature type="region of interest" description="Disordered" evidence="3">
    <location>
        <begin position="797"/>
        <end position="1029"/>
    </location>
</feature>
<feature type="coiled-coil region" evidence="1">
    <location>
        <begin position="92"/>
        <end position="121"/>
    </location>
</feature>
<feature type="coiled-coil region" evidence="1">
    <location>
        <begin position="606"/>
        <end position="903"/>
    </location>
</feature>
<feature type="compositionally biased region" description="Basic and acidic residues" evidence="3">
    <location>
        <begin position="621"/>
        <end position="632"/>
    </location>
</feature>
<feature type="compositionally biased region" description="Basic and acidic residues" evidence="3">
    <location>
        <begin position="644"/>
        <end position="666"/>
    </location>
</feature>
<feature type="compositionally biased region" description="Basic and acidic residues" evidence="3">
    <location>
        <begin position="797"/>
        <end position="901"/>
    </location>
</feature>
<feature type="compositionally biased region" description="Basic and acidic residues" evidence="3">
    <location>
        <begin position="913"/>
        <end position="924"/>
    </location>
</feature>
<feature type="compositionally biased region" description="Low complexity" evidence="3">
    <location>
        <begin position="943"/>
        <end position="960"/>
    </location>
</feature>
<feature type="compositionally biased region" description="Basic and acidic residues" evidence="3">
    <location>
        <begin position="977"/>
        <end position="993"/>
    </location>
</feature>
<evidence type="ECO:0000255" key="1">
    <source>
        <dbReference type="HAMAP-Rule" id="MF_03000"/>
    </source>
</evidence>
<evidence type="ECO:0000255" key="2">
    <source>
        <dbReference type="PROSITE-ProRule" id="PRU01185"/>
    </source>
</evidence>
<evidence type="ECO:0000256" key="3">
    <source>
        <dbReference type="SAM" id="MobiDB-lite"/>
    </source>
</evidence>